<reference key="1">
    <citation type="submission" date="2004-11" db="EMBL/GenBank/DDBJ databases">
        <authorList>
            <consortium name="The German cDNA consortium"/>
        </authorList>
    </citation>
    <scope>NUCLEOTIDE SEQUENCE [LARGE SCALE MRNA]</scope>
    <source>
        <tissue>Heart</tissue>
    </source>
</reference>
<dbReference type="EMBL" id="CR858145">
    <property type="protein sequence ID" value="CAH90384.1"/>
    <property type="molecule type" value="mRNA"/>
</dbReference>
<dbReference type="RefSeq" id="NP_001128983.1">
    <property type="nucleotide sequence ID" value="NM_001135511.2"/>
</dbReference>
<dbReference type="RefSeq" id="XP_063584099.1">
    <property type="nucleotide sequence ID" value="XM_063728029.1"/>
</dbReference>
<dbReference type="RefSeq" id="XP_063584100.1">
    <property type="nucleotide sequence ID" value="XM_063728030.1"/>
</dbReference>
<dbReference type="RefSeq" id="XP_063584101.1">
    <property type="nucleotide sequence ID" value="XM_063728031.1"/>
</dbReference>
<dbReference type="RefSeq" id="XP_063584102.1">
    <property type="nucleotide sequence ID" value="XM_063728032.1"/>
</dbReference>
<dbReference type="RefSeq" id="XP_063584103.1">
    <property type="nucleotide sequence ID" value="XM_063728033.1"/>
</dbReference>
<dbReference type="RefSeq" id="XP_063584104.1">
    <property type="nucleotide sequence ID" value="XM_063728034.1"/>
</dbReference>
<dbReference type="RefSeq" id="XP_063584105.1">
    <property type="nucleotide sequence ID" value="XM_063728035.1"/>
</dbReference>
<dbReference type="RefSeq" id="XP_063584106.1">
    <property type="nucleotide sequence ID" value="XM_063728036.1"/>
</dbReference>
<dbReference type="RefSeq" id="XP_063584107.1">
    <property type="nucleotide sequence ID" value="XM_063728037.1"/>
</dbReference>
<dbReference type="RefSeq" id="XP_063584108.1">
    <property type="nucleotide sequence ID" value="XM_063728038.1"/>
</dbReference>
<dbReference type="RefSeq" id="XP_063584109.1">
    <property type="nucleotide sequence ID" value="XM_063728039.1"/>
</dbReference>
<dbReference type="FunCoup" id="Q5RCX3">
    <property type="interactions" value="1365"/>
</dbReference>
<dbReference type="STRING" id="9601.ENSPPYP00000004318"/>
<dbReference type="GeneID" id="100190823"/>
<dbReference type="KEGG" id="pon:100190823"/>
<dbReference type="CTD" id="79101"/>
<dbReference type="eggNOG" id="ENOG502SQMW">
    <property type="taxonomic scope" value="Eukaryota"/>
</dbReference>
<dbReference type="InParanoid" id="Q5RCX3"/>
<dbReference type="OrthoDB" id="9950926at2759"/>
<dbReference type="Proteomes" id="UP000001595">
    <property type="component" value="Unplaced"/>
</dbReference>
<dbReference type="GO" id="GO:0005654">
    <property type="term" value="C:nucleoplasm"/>
    <property type="evidence" value="ECO:0007669"/>
    <property type="project" value="TreeGrafter"/>
</dbReference>
<dbReference type="GO" id="GO:0005668">
    <property type="term" value="C:RNA polymerase transcription factor SL1 complex"/>
    <property type="evidence" value="ECO:0007669"/>
    <property type="project" value="InterPro"/>
</dbReference>
<dbReference type="GO" id="GO:0003677">
    <property type="term" value="F:DNA binding"/>
    <property type="evidence" value="ECO:0007669"/>
    <property type="project" value="UniProtKB-KW"/>
</dbReference>
<dbReference type="GO" id="GO:0006355">
    <property type="term" value="P:regulation of DNA-templated transcription"/>
    <property type="evidence" value="ECO:0007669"/>
    <property type="project" value="InterPro"/>
</dbReference>
<dbReference type="InterPro" id="IPR027976">
    <property type="entry name" value="TAF1D"/>
</dbReference>
<dbReference type="PANTHER" id="PTHR14562">
    <property type="entry name" value="TATA BOX-BINDING PROTEIN ASSOCIATED FACTOR RNA POLYMERASE I SUBUNIT D"/>
    <property type="match status" value="1"/>
</dbReference>
<dbReference type="PANTHER" id="PTHR14562:SF3">
    <property type="entry name" value="TATA BOX-BINDING PROTEIN-ASSOCIATED FACTOR RNA POLYMERASE I SUBUNIT D"/>
    <property type="match status" value="1"/>
</dbReference>
<dbReference type="Pfam" id="PF15333">
    <property type="entry name" value="TAF1D"/>
    <property type="match status" value="1"/>
</dbReference>
<feature type="chain" id="PRO_0000250719" description="TATA box-binding protein-associated factor RNA polymerase I subunit D">
    <location>
        <begin position="1"/>
        <end position="278"/>
    </location>
</feature>
<feature type="region of interest" description="Disordered" evidence="3">
    <location>
        <begin position="19"/>
        <end position="71"/>
    </location>
</feature>
<feature type="region of interest" description="Disordered" evidence="3">
    <location>
        <begin position="88"/>
        <end position="115"/>
    </location>
</feature>
<feature type="compositionally biased region" description="Basic residues" evidence="3">
    <location>
        <begin position="43"/>
        <end position="53"/>
    </location>
</feature>
<feature type="compositionally biased region" description="Basic residues" evidence="3">
    <location>
        <begin position="88"/>
        <end position="99"/>
    </location>
</feature>
<feature type="modified residue" description="Phosphoserine" evidence="2">
    <location>
        <position position="23"/>
    </location>
</feature>
<feature type="modified residue" description="Phosphoserine" evidence="2">
    <location>
        <position position="138"/>
    </location>
</feature>
<feature type="modified residue" description="Phosphoserine" evidence="2">
    <location>
        <position position="234"/>
    </location>
</feature>
<proteinExistence type="evidence at transcript level"/>
<organism>
    <name type="scientific">Pongo abelii</name>
    <name type="common">Sumatran orangutan</name>
    <name type="synonym">Pongo pygmaeus abelii</name>
    <dbReference type="NCBI Taxonomy" id="9601"/>
    <lineage>
        <taxon>Eukaryota</taxon>
        <taxon>Metazoa</taxon>
        <taxon>Chordata</taxon>
        <taxon>Craniata</taxon>
        <taxon>Vertebrata</taxon>
        <taxon>Euteleostomi</taxon>
        <taxon>Mammalia</taxon>
        <taxon>Eutheria</taxon>
        <taxon>Euarchontoglires</taxon>
        <taxon>Primates</taxon>
        <taxon>Haplorrhini</taxon>
        <taxon>Catarrhini</taxon>
        <taxon>Hominidae</taxon>
        <taxon>Pongo</taxon>
    </lineage>
</organism>
<protein>
    <recommendedName>
        <fullName>TATA box-binding protein-associated factor RNA polymerase I subunit D</fullName>
    </recommendedName>
    <alternativeName>
        <fullName>TATA box-binding protein-associated factor 1D</fullName>
        <shortName>TBP-associated factor 1D</shortName>
    </alternativeName>
    <alternativeName>
        <fullName>Transcription initiation factor SL1/TIF-IB subunit D</fullName>
    </alternativeName>
</protein>
<comment type="function">
    <text evidence="1">Component of the transcription factor SL1/TIF-IB complex, which is involved in the assembly of the PIC (preinitiation complex) during RNA polymerase I-dependent transcription. The rate of PIC formation probably is primarily dependent on the rate of association of SL1/TIF-IB with the rDNA promoter. SL1/TIF-IB is involved in stabilization of nucleolar transcription factor 1/UBTF on rDNA. Formation of SL1/TIF-IB excludes the association of TBP with TFIID subunits (By similarity).</text>
</comment>
<comment type="subunit">
    <text evidence="1">Component of the transcription factor SL1/TIF-IB complex, composed of TBP and at least TAF1A, TAF1B, TAF1C and TAF1D. Interacts with UBTF (By similarity).</text>
</comment>
<comment type="subcellular location">
    <subcellularLocation>
        <location evidence="1">Nucleus</location>
    </subcellularLocation>
</comment>
<accession>Q5RCX3</accession>
<name>TAF1D_PONAB</name>
<keyword id="KW-0238">DNA-binding</keyword>
<keyword id="KW-0539">Nucleus</keyword>
<keyword id="KW-0597">Phosphoprotein</keyword>
<keyword id="KW-1185">Reference proteome</keyword>
<keyword id="KW-0804">Transcription</keyword>
<keyword id="KW-0805">Transcription regulation</keyword>
<sequence length="278" mass="32242">MDKSGIDSLDHVTSDAVELANRSDNSSDSRLFKTQCIPYSPKREKRNPIRKFVRTPESVHASDSSSDSSFEPIPLTMKAIFERFKNRKKRYKKKKKKRYQPTGRPRGRPEGRRNPIYSLIDKKKQFRSRGSGFPFLESENEKNPPWRKILTFEQAVARGFFNYIEKLKYEHHLKESLKQMNVGEDLENEDFDSRRYKFLDDDGSISPIEESTAEDEDATHLEDNECDIKLAGDSFIVSSEFPVRLSVYLEEEDITEEAALSKKRATKAKNTGQRGLKM</sequence>
<evidence type="ECO:0000250" key="1"/>
<evidence type="ECO:0000250" key="2">
    <source>
        <dbReference type="UniProtKB" id="Q9H5J8"/>
    </source>
</evidence>
<evidence type="ECO:0000256" key="3">
    <source>
        <dbReference type="SAM" id="MobiDB-lite"/>
    </source>
</evidence>
<gene>
    <name type="primary">TAF1D</name>
    <name type="synonym">JOSD3</name>
</gene>